<gene>
    <name evidence="8" type="primary">nat</name>
    <name type="synonym">nhoA</name>
    <name type="synonym">tbnat</name>
    <name type="ordered locus">Rv3566c</name>
    <name type="ORF">MTCY06G11.13c</name>
</gene>
<keyword id="KW-0012">Acyltransferase</keyword>
<keyword id="KW-0046">Antibiotic resistance</keyword>
<keyword id="KW-1185">Reference proteome</keyword>
<keyword id="KW-0808">Transferase</keyword>
<dbReference type="EC" id="2.3.1.5" evidence="2 3"/>
<dbReference type="EMBL" id="AL123456">
    <property type="protein sequence ID" value="CCP46388.1"/>
    <property type="molecule type" value="Genomic_DNA"/>
</dbReference>
<dbReference type="RefSeq" id="WP_003419364.1">
    <property type="nucleotide sequence ID" value="NZ_NVQJ01000014.1"/>
</dbReference>
<dbReference type="RefSeq" id="YP_177989.1">
    <property type="nucleotide sequence ID" value="NC_000962.3"/>
</dbReference>
<dbReference type="SMR" id="P9WJI5"/>
<dbReference type="FunCoup" id="P9WJI5">
    <property type="interactions" value="33"/>
</dbReference>
<dbReference type="STRING" id="83332.Rv3566c"/>
<dbReference type="DrugBank" id="DB00515">
    <property type="generic name" value="Cisplatin"/>
</dbReference>
<dbReference type="DrugBank" id="DB00951">
    <property type="generic name" value="Isoniazid"/>
</dbReference>
<dbReference type="DrugBank" id="DB01582">
    <property type="generic name" value="Sulfamethazine"/>
</dbReference>
<dbReference type="PaxDb" id="83332-Rv3566c"/>
<dbReference type="GeneID" id="888005"/>
<dbReference type="KEGG" id="mtu:Rv3566c"/>
<dbReference type="KEGG" id="mtv:RVBD_3566c"/>
<dbReference type="TubercuList" id="Rv3566c"/>
<dbReference type="eggNOG" id="COG2162">
    <property type="taxonomic scope" value="Bacteria"/>
</dbReference>
<dbReference type="InParanoid" id="P9WJI5"/>
<dbReference type="OrthoDB" id="7181050at2"/>
<dbReference type="PhylomeDB" id="P9WJI5"/>
<dbReference type="BRENDA" id="2.3.1.5">
    <property type="organism ID" value="3445"/>
</dbReference>
<dbReference type="Proteomes" id="UP000001584">
    <property type="component" value="Chromosome"/>
</dbReference>
<dbReference type="GO" id="GO:0005886">
    <property type="term" value="C:plasma membrane"/>
    <property type="evidence" value="ECO:0007005"/>
    <property type="project" value="MTBBASE"/>
</dbReference>
<dbReference type="GO" id="GO:0004060">
    <property type="term" value="F:arylamine N-acetyltransferase activity"/>
    <property type="evidence" value="ECO:0000314"/>
    <property type="project" value="MTBBASE"/>
</dbReference>
<dbReference type="GO" id="GO:0046677">
    <property type="term" value="P:response to antibiotic"/>
    <property type="evidence" value="ECO:0007669"/>
    <property type="project" value="UniProtKB-KW"/>
</dbReference>
<dbReference type="Gene3D" id="3.30.2140.10">
    <property type="entry name" value="Arylamine N-acetyltransferase"/>
    <property type="match status" value="1"/>
</dbReference>
<dbReference type="Gene3D" id="2.40.128.150">
    <property type="entry name" value="Cysteine proteinases"/>
    <property type="match status" value="1"/>
</dbReference>
<dbReference type="InterPro" id="IPR001447">
    <property type="entry name" value="Arylamine_N-AcTrfase"/>
</dbReference>
<dbReference type="InterPro" id="IPR038765">
    <property type="entry name" value="Papain-like_cys_pep_sf"/>
</dbReference>
<dbReference type="PANTHER" id="PTHR11786:SF0">
    <property type="entry name" value="ARYLAMINE N-ACETYLTRANSFERASE 4-RELATED"/>
    <property type="match status" value="1"/>
</dbReference>
<dbReference type="PANTHER" id="PTHR11786">
    <property type="entry name" value="N-HYDROXYARYLAMINE O-ACETYLTRANSFERASE"/>
    <property type="match status" value="1"/>
</dbReference>
<dbReference type="Pfam" id="PF00797">
    <property type="entry name" value="Acetyltransf_2"/>
    <property type="match status" value="1"/>
</dbReference>
<dbReference type="SUPFAM" id="SSF54001">
    <property type="entry name" value="Cysteine proteinases"/>
    <property type="match status" value="1"/>
</dbReference>
<name>NAT_MYCTU</name>
<proteinExistence type="evidence at protein level"/>
<reference key="1">
    <citation type="journal article" date="1998" name="Nature">
        <title>Deciphering the biology of Mycobacterium tuberculosis from the complete genome sequence.</title>
        <authorList>
            <person name="Cole S.T."/>
            <person name="Brosch R."/>
            <person name="Parkhill J."/>
            <person name="Garnier T."/>
            <person name="Churcher C.M."/>
            <person name="Harris D.E."/>
            <person name="Gordon S.V."/>
            <person name="Eiglmeier K."/>
            <person name="Gas S."/>
            <person name="Barry C.E. III"/>
            <person name="Tekaia F."/>
            <person name="Badcock K."/>
            <person name="Basham D."/>
            <person name="Brown D."/>
            <person name="Chillingworth T."/>
            <person name="Connor R."/>
            <person name="Davies R.M."/>
            <person name="Devlin K."/>
            <person name="Feltwell T."/>
            <person name="Gentles S."/>
            <person name="Hamlin N."/>
            <person name="Holroyd S."/>
            <person name="Hornsby T."/>
            <person name="Jagels K."/>
            <person name="Krogh A."/>
            <person name="McLean J."/>
            <person name="Moule S."/>
            <person name="Murphy L.D."/>
            <person name="Oliver S."/>
            <person name="Osborne J."/>
            <person name="Quail M.A."/>
            <person name="Rajandream M.A."/>
            <person name="Rogers J."/>
            <person name="Rutter S."/>
            <person name="Seeger K."/>
            <person name="Skelton S."/>
            <person name="Squares S."/>
            <person name="Squares R."/>
            <person name="Sulston J.E."/>
            <person name="Taylor K."/>
            <person name="Whitehead S."/>
            <person name="Barrell B.G."/>
        </authorList>
    </citation>
    <scope>NUCLEOTIDE SEQUENCE [LARGE SCALE GENOMIC DNA]</scope>
    <source>
        <strain>ATCC 25618 / H37Rv</strain>
    </source>
</reference>
<reference key="2">
    <citation type="journal article" date="2002" name="Microbiology">
        <title>Re-annotation of the genome sequence of Mycobacterium tuberculosis H37Rv.</title>
        <authorList>
            <person name="Camus J.-C."/>
            <person name="Pryor M.J."/>
            <person name="Medigue C."/>
            <person name="Cole S.T."/>
        </authorList>
    </citation>
    <scope>SEQUENCE REVISION</scope>
</reference>
<reference key="3">
    <citation type="journal article" date="1999" name="J. Bacteriol.">
        <title>Cloning and characterization of arylamine N-acetyltransferase genes from Mycobacterium smegmatis and Mycobacterium tuberculosis: increased expression results in isoniazid resistance.</title>
        <authorList>
            <person name="Payton M.A."/>
            <person name="Auty R."/>
            <person name="Delgoda R.T."/>
            <person name="Everitt M."/>
            <person name="Sim E."/>
        </authorList>
    </citation>
    <scope>FUNCTION</scope>
</reference>
<reference key="4">
    <citation type="journal article" date="2008" name="Biochemistry">
        <title>Kinetic and chemical mechanism of arylamine N-acetyltransferase from Mycobacterium tuberculosis.</title>
        <authorList>
            <person name="Sikora A.L."/>
            <person name="Frankel B.A."/>
            <person name="Blanchard J.S."/>
        </authorList>
    </citation>
    <scope>FUNCTION</scope>
    <scope>CATALYTIC ACTIVITY</scope>
    <scope>SUBSTRATE SPECIFICITY</scope>
    <scope>BIOPHYSICOCHEMICAL PROPERTIES</scope>
    <scope>REACTION MECHANISM</scope>
    <scope>ACTIVE SITE</scope>
    <source>
        <strain>H37Rv</strain>
    </source>
</reference>
<reference key="5">
    <citation type="journal article" date="2009" name="Biochem. J.">
        <title>Temperature stability of proteins essential for the intracellular survival of Mycobacterium tuberculosis.</title>
        <authorList>
            <person name="Lack N.A."/>
            <person name="Kawamura A."/>
            <person name="Fullam E."/>
            <person name="Laurieri N."/>
            <person name="Beard S."/>
            <person name="Russell A.J."/>
            <person name="Evangelopoulos D."/>
            <person name="Westwood I."/>
            <person name="Sim E."/>
        </authorList>
    </citation>
    <scope>FUNCTION</scope>
    <scope>CATALYTIC ACTIVITY</scope>
    <scope>SUBSTRATE SPECIFICITY</scope>
    <scope>BIOPHYSICOCHEMICAL PROPERTIES</scope>
</reference>
<reference key="6">
    <citation type="journal article" date="2008" name="BMC Syst. Biol.">
        <title>targetTB: a target identification pipeline for Mycobacterium tuberculosis through an interactome, reactome and genome-scale structural analysis.</title>
        <authorList>
            <person name="Raman K."/>
            <person name="Yeturu K."/>
            <person name="Chandra N."/>
        </authorList>
    </citation>
    <scope>IDENTIFICATION AS A DRUG TARGET [LARGE SCALE ANALYSIS]</scope>
</reference>
<reference key="7">
    <citation type="journal article" date="2011" name="Mol. Cell. Proteomics">
        <title>Proteogenomic analysis of Mycobacterium tuberculosis by high resolution mass spectrometry.</title>
        <authorList>
            <person name="Kelkar D.S."/>
            <person name="Kumar D."/>
            <person name="Kumar P."/>
            <person name="Balakrishnan L."/>
            <person name="Muthusamy B."/>
            <person name="Yadav A.K."/>
            <person name="Shrivastava P."/>
            <person name="Marimuthu A."/>
            <person name="Anand S."/>
            <person name="Sundaram H."/>
            <person name="Kingsbury R."/>
            <person name="Harsha H.C."/>
            <person name="Nair B."/>
            <person name="Prasad T.S."/>
            <person name="Chauhan D.S."/>
            <person name="Katoch K."/>
            <person name="Katoch V.M."/>
            <person name="Kumar P."/>
            <person name="Chaerkady R."/>
            <person name="Ramachandran S."/>
            <person name="Dash D."/>
            <person name="Pandey A."/>
        </authorList>
    </citation>
    <scope>IDENTIFICATION BY MASS SPECTROMETRY [LARGE SCALE ANALYSIS]</scope>
    <source>
        <strain>ATCC 25618 / H37Rv</strain>
    </source>
</reference>
<reference key="8">
    <citation type="journal article" date="2011" name="Mutat. Res.">
        <title>Sequence and structural characterization of tbnat gene in isoniazid-resistant Mycobacterium tuberculosis: identification of new mutations.</title>
        <authorList>
            <person name="Coelho M.B."/>
            <person name="Costa E.R."/>
            <person name="Vasconcellos S.E."/>
            <person name="Linck N."/>
            <person name="Ramos R.M."/>
            <person name="Amorim H.L."/>
            <person name="Suffys P.N."/>
            <person name="Santos A.R."/>
            <person name="Silva P.E."/>
            <person name="Ramos D.F."/>
            <person name="Silva M.S."/>
            <person name="Rossetti M.L."/>
        </authorList>
    </citation>
    <scope>3D-STRUCTURE MODELING</scope>
    <scope>DRUG RESISTANCE</scope>
</reference>
<protein>
    <recommendedName>
        <fullName evidence="8">Arylamine N-acetyltransferase</fullName>
        <shortName evidence="8">NAT</shortName>
        <ecNumber evidence="2 3">2.3.1.5</ecNumber>
    </recommendedName>
    <alternativeName>
        <fullName evidence="6 7">TBNAT</fullName>
    </alternativeName>
</protein>
<evidence type="ECO:0000250" key="1">
    <source>
        <dbReference type="UniProtKB" id="O86309"/>
    </source>
</evidence>
<evidence type="ECO:0000269" key="2">
    <source>
    </source>
</evidence>
<evidence type="ECO:0000269" key="3">
    <source>
    </source>
</evidence>
<evidence type="ECO:0000269" key="4">
    <source>
    </source>
</evidence>
<evidence type="ECO:0000269" key="5">
    <source>
    </source>
</evidence>
<evidence type="ECO:0000303" key="6">
    <source>
    </source>
</evidence>
<evidence type="ECO:0000303" key="7">
    <source>
    </source>
</evidence>
<evidence type="ECO:0000303" key="8">
    <source>
    </source>
</evidence>
<evidence type="ECO:0000305" key="9"/>
<evidence type="ECO:0000305" key="10">
    <source>
    </source>
</evidence>
<evidence type="ECO:0000305" key="11">
    <source>
    </source>
</evidence>
<sequence>MALDLTAYFDRINYRGATDPTLDVLQDLVTVHSRTIPFENLDPLLGVPVDDLSPQALADKLVLRRRGGYCFEHNGLMGYVLAELGYRVRRFAARVVWKLAPDAPLPPQTHTLLGVTFPGSGGCYLVDVGFGGQTPTSPLRLETGAVQPTTHEPYRLEDRVDGFVLQAMVRDTWQTLYEFTTQTRPQIDLKVASWYASTHPASKFVTGLTAAVITDDARWNLSGRDLAVHRAGGTEKIRLADAAAVVDTLSERFGINVADIGERGALETRIDELLARQPGADAP</sequence>
<feature type="chain" id="PRO_0000107919" description="Arylamine N-acetyltransferase">
    <location>
        <begin position="1"/>
        <end position="283"/>
    </location>
</feature>
<feature type="active site" description="Acyl-thioester intermediate" evidence="10">
    <location>
        <position position="70"/>
    </location>
</feature>
<feature type="active site" description="Proton acceptor" evidence="10">
    <location>
        <position position="110"/>
    </location>
</feature>
<feature type="active site" evidence="10">
    <location>
        <position position="127"/>
    </location>
</feature>
<comment type="function">
    <text evidence="2 3">Catalyzes the transfer of the acetyl group from acetyl coenzyme A to the free amino group of arylamines and hydrazines (PubMed:18795795). Is able to utilize not only acetyl-CoA, but also n-propionyl-CoA and acetoacetyl-CoA as acyl donors, although at a lower rate (PubMed:19014350). As acetyl-CoA and propionyl-CoA are products of cholesterol catabolism and the nat gene is likely present in the same operon than genes involved in cholesterol degradation, this enzyme could have a role in the utilization and regulation of these CoA species (PubMed:19014350).</text>
</comment>
<comment type="function">
    <text evidence="2 5">It has been reported that overexpression of this enzyme may be responsible for increased resistance to the front-line antitubercular drug isoniazid (INH), by acetylating and hence inactivating the prodrug (PubMed:9973365). However, isoniazid is an extremely poor substrate for the enzyme; therefore, the expression of TBNAT is unlikely to be a significant cause of isoniazid resistance in M.tuberculosis (PubMed:18795795).</text>
</comment>
<comment type="catalytic activity">
    <reaction evidence="2 3">
        <text>an arylamine + acetyl-CoA = an N-acetylarylamine + CoA</text>
        <dbReference type="Rhea" id="RHEA:16613"/>
        <dbReference type="ChEBI" id="CHEBI:13790"/>
        <dbReference type="ChEBI" id="CHEBI:50471"/>
        <dbReference type="ChEBI" id="CHEBI:57287"/>
        <dbReference type="ChEBI" id="CHEBI:57288"/>
        <dbReference type="EC" id="2.3.1.5"/>
    </reaction>
</comment>
<comment type="biophysicochemical properties">
    <kinetics>
        <KM evidence="2">0.14 mM for acetyl-CoA</KM>
        <KM evidence="3">0.56 mM for acetyl-CoA</KM>
        <KM evidence="3">0.29 mM for n-propionyl-CoA</KM>
        <KM evidence="2">0.32 mM for 3-amino-4-hydroxybenzoic acid</KM>
        <KM evidence="2">0.9 mM for 4-amino-3-hydroxybenzoic acid</KM>
        <KM evidence="2">0.61 mM for hydralazine</KM>
        <KM evidence="2">3.06 mM for 2-amino-4-methylphenol</KM>
        <KM evidence="2">1.9 mM for 2-amino-4-chlorophenol</KM>
        <KM evidence="2">5.79 mM for 2-aminophenol</KM>
        <KM evidence="2">20 mM for 4-hydroxybenzhydrazide</KM>
        <KM evidence="2">14 mM for anisidine</KM>
        <KM evidence="2">5 mM for p-aminobenzoic acid</KM>
        <KM evidence="2">14 mM for benzoic acid hydrazide</KM>
        <KM evidence="2">11 mM for 4-methylaniline</KM>
        <KM evidence="2">102 mM for isoniazid</KM>
        <KM evidence="2">14 mM for nicotinic acid hydrazide</KM>
        <KM evidence="2">6 mM for 4-chloroaniline</KM>
        <KM evidence="2">23 mM for aniline</KM>
        <KM evidence="2">51 mM for 4-fluoroaniline</KM>
        <text evidence="2">kcat is 94 sec(-1) with 3-amino-4-hydroxybenzoic acid as substrate. kcat is 66 sec(-1) with 4-amino-3-hydroxybenzoic acid as substrate. kcat is 44 sec(-1) with hydralazine as substrate. kcat is 70 sec(-1) with 2-amino-4-methylphenol as substrate. kcat is 21 sec(-1) with 2-amino-4-chlorophenol as substrate. kcat is 51 sec(-1) with 2-aminophenol as substrate. kcat is 10.9 sec(-1) with 4-hydroxybenzhydrazide as substrate. kcat is 2.9 sec(-1) with anisidine as substrate. kcat is 0.7 sec(-1) with p-aminobenzoic acid as substrate. kcat is 1.9 sec(-1) with benzoic acid hydrazide as substrate. kcat is 0.8 sec(-1) with 4-methylaniline as substrate. kcat is 4.9 sec(-1) with isoniazid as substrate. kcat is 0.6 sec(-1) with nicotinic acid hydrazide as substrate. kcat is 0.2 sec(-1) with 4-chloroaniline as substrate. kcat is 0.28 sec(-1) with aniline as substrate. kcat is 0.9 sec(-1) with 4-fluoroaniline as substrate.</text>
    </kinetics>
    <temperatureDependence>
        <text evidence="3">Is thermostable. Retains &gt;95% of its activity after incubation at 60 degrees Celsius for 30 minutes.</text>
    </temperatureDependence>
</comment>
<comment type="subunit">
    <text evidence="1">Homodimer and homotetramer.</text>
</comment>
<comment type="miscellaneous">
    <text evidence="11">Was identified as a high-confidence drug target.</text>
</comment>
<comment type="miscellaneous">
    <text evidence="2">Reactions proceed via a bi-bi ping-pong kinetic mechanism.</text>
</comment>
<comment type="miscellaneous">
    <text evidence="4">Resistance to the antitubercular drug isoniazid (INH) has been associated to mutations in this gene in some INH-resistant clinical isolates of M.tuberculosis.</text>
</comment>
<comment type="similarity">
    <text evidence="9">Belongs to the arylamine N-acetyltransferase family.</text>
</comment>
<organism>
    <name type="scientific">Mycobacterium tuberculosis (strain ATCC 25618 / H37Rv)</name>
    <dbReference type="NCBI Taxonomy" id="83332"/>
    <lineage>
        <taxon>Bacteria</taxon>
        <taxon>Bacillati</taxon>
        <taxon>Actinomycetota</taxon>
        <taxon>Actinomycetes</taxon>
        <taxon>Mycobacteriales</taxon>
        <taxon>Mycobacteriaceae</taxon>
        <taxon>Mycobacterium</taxon>
        <taxon>Mycobacterium tuberculosis complex</taxon>
    </lineage>
</organism>
<accession>P9WJI5</accession>
<accession>L0TCY1</accession>
<accession>P0A5L8</accession>
<accession>P96848</accession>